<dbReference type="EC" id="6.3.4.16" evidence="1"/>
<dbReference type="EC" id="6.3.5.5" evidence="1"/>
<dbReference type="EMBL" id="BA000030">
    <property type="protein sequence ID" value="BAC74578.1"/>
    <property type="molecule type" value="Genomic_DNA"/>
</dbReference>
<dbReference type="RefSeq" id="WP_010988265.1">
    <property type="nucleotide sequence ID" value="NZ_JZJK01000082.1"/>
</dbReference>
<dbReference type="SMR" id="Q827Q7"/>
<dbReference type="GeneID" id="41543942"/>
<dbReference type="KEGG" id="sma:SAVERM_6867"/>
<dbReference type="eggNOG" id="COG0458">
    <property type="taxonomic scope" value="Bacteria"/>
</dbReference>
<dbReference type="HOGENOM" id="CLU_000513_1_0_11"/>
<dbReference type="OrthoDB" id="9804197at2"/>
<dbReference type="UniPathway" id="UPA00068">
    <property type="reaction ID" value="UER00171"/>
</dbReference>
<dbReference type="UniPathway" id="UPA00070">
    <property type="reaction ID" value="UER00115"/>
</dbReference>
<dbReference type="Proteomes" id="UP000000428">
    <property type="component" value="Chromosome"/>
</dbReference>
<dbReference type="GO" id="GO:0005737">
    <property type="term" value="C:cytoplasm"/>
    <property type="evidence" value="ECO:0007669"/>
    <property type="project" value="TreeGrafter"/>
</dbReference>
<dbReference type="GO" id="GO:0005524">
    <property type="term" value="F:ATP binding"/>
    <property type="evidence" value="ECO:0007669"/>
    <property type="project" value="UniProtKB-UniRule"/>
</dbReference>
<dbReference type="GO" id="GO:0004087">
    <property type="term" value="F:carbamoyl-phosphate synthase (ammonia) activity"/>
    <property type="evidence" value="ECO:0007669"/>
    <property type="project" value="RHEA"/>
</dbReference>
<dbReference type="GO" id="GO:0004088">
    <property type="term" value="F:carbamoyl-phosphate synthase (glutamine-hydrolyzing) activity"/>
    <property type="evidence" value="ECO:0007669"/>
    <property type="project" value="UniProtKB-UniRule"/>
</dbReference>
<dbReference type="GO" id="GO:0046872">
    <property type="term" value="F:metal ion binding"/>
    <property type="evidence" value="ECO:0007669"/>
    <property type="project" value="UniProtKB-KW"/>
</dbReference>
<dbReference type="GO" id="GO:0044205">
    <property type="term" value="P:'de novo' UMP biosynthetic process"/>
    <property type="evidence" value="ECO:0007669"/>
    <property type="project" value="UniProtKB-UniRule"/>
</dbReference>
<dbReference type="GO" id="GO:0006541">
    <property type="term" value="P:glutamine metabolic process"/>
    <property type="evidence" value="ECO:0007669"/>
    <property type="project" value="TreeGrafter"/>
</dbReference>
<dbReference type="GO" id="GO:0006526">
    <property type="term" value="P:L-arginine biosynthetic process"/>
    <property type="evidence" value="ECO:0007669"/>
    <property type="project" value="UniProtKB-UniRule"/>
</dbReference>
<dbReference type="CDD" id="cd01424">
    <property type="entry name" value="MGS_CPS_II"/>
    <property type="match status" value="1"/>
</dbReference>
<dbReference type="FunFam" id="1.10.1030.10:FF:000002">
    <property type="entry name" value="Carbamoyl-phosphate synthase large chain"/>
    <property type="match status" value="1"/>
</dbReference>
<dbReference type="FunFam" id="3.30.1490.20:FF:000001">
    <property type="entry name" value="Carbamoyl-phosphate synthase large chain"/>
    <property type="match status" value="1"/>
</dbReference>
<dbReference type="FunFam" id="3.30.470.20:FF:000007">
    <property type="entry name" value="Carbamoyl-phosphate synthase large chain"/>
    <property type="match status" value="1"/>
</dbReference>
<dbReference type="FunFam" id="3.30.470.20:FF:000014">
    <property type="entry name" value="Carbamoyl-phosphate synthase large chain"/>
    <property type="match status" value="1"/>
</dbReference>
<dbReference type="FunFam" id="3.40.50.1380:FF:000007">
    <property type="entry name" value="Carbamoyl-phosphate synthase large chain"/>
    <property type="match status" value="1"/>
</dbReference>
<dbReference type="FunFam" id="3.40.50.20:FF:000001">
    <property type="entry name" value="Carbamoyl-phosphate synthase large chain"/>
    <property type="match status" value="1"/>
</dbReference>
<dbReference type="FunFam" id="3.40.50.20:FF:000003">
    <property type="entry name" value="Carbamoyl-phosphate synthase large chain"/>
    <property type="match status" value="1"/>
</dbReference>
<dbReference type="Gene3D" id="3.40.50.20">
    <property type="match status" value="2"/>
</dbReference>
<dbReference type="Gene3D" id="3.30.1490.20">
    <property type="entry name" value="ATP-grasp fold, A domain"/>
    <property type="match status" value="1"/>
</dbReference>
<dbReference type="Gene3D" id="3.30.470.20">
    <property type="entry name" value="ATP-grasp fold, B domain"/>
    <property type="match status" value="2"/>
</dbReference>
<dbReference type="Gene3D" id="1.10.1030.10">
    <property type="entry name" value="Carbamoyl-phosphate synthetase, large subunit oligomerisation domain"/>
    <property type="match status" value="1"/>
</dbReference>
<dbReference type="Gene3D" id="3.40.50.1380">
    <property type="entry name" value="Methylglyoxal synthase-like domain"/>
    <property type="match status" value="1"/>
</dbReference>
<dbReference type="HAMAP" id="MF_01210_B">
    <property type="entry name" value="CPSase_L_chain_B"/>
    <property type="match status" value="1"/>
</dbReference>
<dbReference type="InterPro" id="IPR011761">
    <property type="entry name" value="ATP-grasp"/>
</dbReference>
<dbReference type="InterPro" id="IPR013815">
    <property type="entry name" value="ATP_grasp_subdomain_1"/>
</dbReference>
<dbReference type="InterPro" id="IPR006275">
    <property type="entry name" value="CarbamoylP_synth_lsu"/>
</dbReference>
<dbReference type="InterPro" id="IPR005480">
    <property type="entry name" value="CarbamoylP_synth_lsu_oligo"/>
</dbReference>
<dbReference type="InterPro" id="IPR036897">
    <property type="entry name" value="CarbamoylP_synth_lsu_oligo_sf"/>
</dbReference>
<dbReference type="InterPro" id="IPR005479">
    <property type="entry name" value="CbamoylP_synth_lsu-like_ATP-bd"/>
</dbReference>
<dbReference type="InterPro" id="IPR005483">
    <property type="entry name" value="CbamoylP_synth_lsu_CPSase_dom"/>
</dbReference>
<dbReference type="InterPro" id="IPR011607">
    <property type="entry name" value="MGS-like_dom"/>
</dbReference>
<dbReference type="InterPro" id="IPR036914">
    <property type="entry name" value="MGS-like_dom_sf"/>
</dbReference>
<dbReference type="InterPro" id="IPR033937">
    <property type="entry name" value="MGS_CPS_CarB"/>
</dbReference>
<dbReference type="InterPro" id="IPR016185">
    <property type="entry name" value="PreATP-grasp_dom_sf"/>
</dbReference>
<dbReference type="NCBIfam" id="TIGR01369">
    <property type="entry name" value="CPSaseII_lrg"/>
    <property type="match status" value="1"/>
</dbReference>
<dbReference type="NCBIfam" id="NF003671">
    <property type="entry name" value="PRK05294.1"/>
    <property type="match status" value="1"/>
</dbReference>
<dbReference type="NCBIfam" id="NF009455">
    <property type="entry name" value="PRK12815.1"/>
    <property type="match status" value="1"/>
</dbReference>
<dbReference type="PANTHER" id="PTHR11405:SF53">
    <property type="entry name" value="CARBAMOYL-PHOSPHATE SYNTHASE [AMMONIA], MITOCHONDRIAL"/>
    <property type="match status" value="1"/>
</dbReference>
<dbReference type="PANTHER" id="PTHR11405">
    <property type="entry name" value="CARBAMOYLTRANSFERASE FAMILY MEMBER"/>
    <property type="match status" value="1"/>
</dbReference>
<dbReference type="Pfam" id="PF02786">
    <property type="entry name" value="CPSase_L_D2"/>
    <property type="match status" value="2"/>
</dbReference>
<dbReference type="Pfam" id="PF02787">
    <property type="entry name" value="CPSase_L_D3"/>
    <property type="match status" value="1"/>
</dbReference>
<dbReference type="Pfam" id="PF02142">
    <property type="entry name" value="MGS"/>
    <property type="match status" value="1"/>
</dbReference>
<dbReference type="PRINTS" id="PR00098">
    <property type="entry name" value="CPSASE"/>
</dbReference>
<dbReference type="SMART" id="SM01096">
    <property type="entry name" value="CPSase_L_D3"/>
    <property type="match status" value="1"/>
</dbReference>
<dbReference type="SMART" id="SM00851">
    <property type="entry name" value="MGS"/>
    <property type="match status" value="1"/>
</dbReference>
<dbReference type="SUPFAM" id="SSF48108">
    <property type="entry name" value="Carbamoyl phosphate synthetase, large subunit connection domain"/>
    <property type="match status" value="1"/>
</dbReference>
<dbReference type="SUPFAM" id="SSF56059">
    <property type="entry name" value="Glutathione synthetase ATP-binding domain-like"/>
    <property type="match status" value="2"/>
</dbReference>
<dbReference type="SUPFAM" id="SSF52335">
    <property type="entry name" value="Methylglyoxal synthase-like"/>
    <property type="match status" value="1"/>
</dbReference>
<dbReference type="SUPFAM" id="SSF52440">
    <property type="entry name" value="PreATP-grasp domain"/>
    <property type="match status" value="2"/>
</dbReference>
<dbReference type="PROSITE" id="PS50975">
    <property type="entry name" value="ATP_GRASP"/>
    <property type="match status" value="2"/>
</dbReference>
<dbReference type="PROSITE" id="PS00866">
    <property type="entry name" value="CPSASE_1"/>
    <property type="match status" value="2"/>
</dbReference>
<dbReference type="PROSITE" id="PS00867">
    <property type="entry name" value="CPSASE_2"/>
    <property type="match status" value="2"/>
</dbReference>
<dbReference type="PROSITE" id="PS51855">
    <property type="entry name" value="MGS"/>
    <property type="match status" value="1"/>
</dbReference>
<gene>
    <name evidence="1" type="primary">carB</name>
    <name type="ordered locus">SAV_6867</name>
</gene>
<keyword id="KW-0028">Amino-acid biosynthesis</keyword>
<keyword id="KW-0055">Arginine biosynthesis</keyword>
<keyword id="KW-0067">ATP-binding</keyword>
<keyword id="KW-0436">Ligase</keyword>
<keyword id="KW-0460">Magnesium</keyword>
<keyword id="KW-0464">Manganese</keyword>
<keyword id="KW-0479">Metal-binding</keyword>
<keyword id="KW-0547">Nucleotide-binding</keyword>
<keyword id="KW-0665">Pyrimidine biosynthesis</keyword>
<keyword id="KW-1185">Reference proteome</keyword>
<keyword id="KW-0677">Repeat</keyword>
<feature type="chain" id="PRO_0000145049" description="Carbamoyl phosphate synthase large chain">
    <location>
        <begin position="1"/>
        <end position="1102"/>
    </location>
</feature>
<feature type="domain" description="ATP-grasp 1" evidence="1">
    <location>
        <begin position="138"/>
        <end position="334"/>
    </location>
</feature>
<feature type="domain" description="ATP-grasp 2" evidence="1">
    <location>
        <begin position="682"/>
        <end position="873"/>
    </location>
</feature>
<feature type="domain" description="MGS-like" evidence="1">
    <location>
        <begin position="955"/>
        <end position="1100"/>
    </location>
</feature>
<feature type="region of interest" description="Carboxyphosphate synthetic domain" evidence="1">
    <location>
        <begin position="1"/>
        <end position="408"/>
    </location>
</feature>
<feature type="region of interest" description="Oligomerization domain" evidence="1">
    <location>
        <begin position="409"/>
        <end position="551"/>
    </location>
</feature>
<feature type="region of interest" description="Carbamoyl phosphate synthetic domain" evidence="1">
    <location>
        <begin position="552"/>
        <end position="954"/>
    </location>
</feature>
<feature type="region of interest" description="Allosteric domain" evidence="1">
    <location>
        <begin position="955"/>
        <end position="1102"/>
    </location>
</feature>
<feature type="binding site" evidence="1">
    <location>
        <position position="129"/>
    </location>
    <ligand>
        <name>ATP</name>
        <dbReference type="ChEBI" id="CHEBI:30616"/>
        <label>1</label>
    </ligand>
</feature>
<feature type="binding site" evidence="1">
    <location>
        <position position="175"/>
    </location>
    <ligand>
        <name>ATP</name>
        <dbReference type="ChEBI" id="CHEBI:30616"/>
        <label>1</label>
    </ligand>
</feature>
<feature type="binding site" evidence="1">
    <location>
        <position position="181"/>
    </location>
    <ligand>
        <name>ATP</name>
        <dbReference type="ChEBI" id="CHEBI:30616"/>
        <label>1</label>
    </ligand>
</feature>
<feature type="binding site" evidence="1">
    <location>
        <position position="182"/>
    </location>
    <ligand>
        <name>ATP</name>
        <dbReference type="ChEBI" id="CHEBI:30616"/>
        <label>1</label>
    </ligand>
</feature>
<feature type="binding site" evidence="1">
    <location>
        <position position="214"/>
    </location>
    <ligand>
        <name>ATP</name>
        <dbReference type="ChEBI" id="CHEBI:30616"/>
        <label>1</label>
    </ligand>
</feature>
<feature type="binding site" evidence="1">
    <location>
        <position position="216"/>
    </location>
    <ligand>
        <name>ATP</name>
        <dbReference type="ChEBI" id="CHEBI:30616"/>
        <label>1</label>
    </ligand>
</feature>
<feature type="binding site" evidence="1">
    <location>
        <position position="221"/>
    </location>
    <ligand>
        <name>ATP</name>
        <dbReference type="ChEBI" id="CHEBI:30616"/>
        <label>1</label>
    </ligand>
</feature>
<feature type="binding site" evidence="1">
    <location>
        <position position="247"/>
    </location>
    <ligand>
        <name>ATP</name>
        <dbReference type="ChEBI" id="CHEBI:30616"/>
        <label>1</label>
    </ligand>
</feature>
<feature type="binding site" evidence="1">
    <location>
        <position position="248"/>
    </location>
    <ligand>
        <name>ATP</name>
        <dbReference type="ChEBI" id="CHEBI:30616"/>
        <label>1</label>
    </ligand>
</feature>
<feature type="binding site" evidence="1">
    <location>
        <position position="249"/>
    </location>
    <ligand>
        <name>ATP</name>
        <dbReference type="ChEBI" id="CHEBI:30616"/>
        <label>1</label>
    </ligand>
</feature>
<feature type="binding site" evidence="1">
    <location>
        <position position="291"/>
    </location>
    <ligand>
        <name>ATP</name>
        <dbReference type="ChEBI" id="CHEBI:30616"/>
        <label>1</label>
    </ligand>
</feature>
<feature type="binding site" evidence="1">
    <location>
        <position position="291"/>
    </location>
    <ligand>
        <name>Mg(2+)</name>
        <dbReference type="ChEBI" id="CHEBI:18420"/>
        <label>1</label>
    </ligand>
</feature>
<feature type="binding site" evidence="1">
    <location>
        <position position="291"/>
    </location>
    <ligand>
        <name>Mn(2+)</name>
        <dbReference type="ChEBI" id="CHEBI:29035"/>
        <label>1</label>
    </ligand>
</feature>
<feature type="binding site" evidence="1">
    <location>
        <position position="305"/>
    </location>
    <ligand>
        <name>ATP</name>
        <dbReference type="ChEBI" id="CHEBI:30616"/>
        <label>1</label>
    </ligand>
</feature>
<feature type="binding site" evidence="1">
    <location>
        <position position="305"/>
    </location>
    <ligand>
        <name>Mg(2+)</name>
        <dbReference type="ChEBI" id="CHEBI:18420"/>
        <label>1</label>
    </ligand>
</feature>
<feature type="binding site" evidence="1">
    <location>
        <position position="305"/>
    </location>
    <ligand>
        <name>Mg(2+)</name>
        <dbReference type="ChEBI" id="CHEBI:18420"/>
        <label>2</label>
    </ligand>
</feature>
<feature type="binding site" evidence="1">
    <location>
        <position position="305"/>
    </location>
    <ligand>
        <name>Mn(2+)</name>
        <dbReference type="ChEBI" id="CHEBI:29035"/>
        <label>1</label>
    </ligand>
</feature>
<feature type="binding site" evidence="1">
    <location>
        <position position="305"/>
    </location>
    <ligand>
        <name>Mn(2+)</name>
        <dbReference type="ChEBI" id="CHEBI:29035"/>
        <label>2</label>
    </ligand>
</feature>
<feature type="binding site" evidence="1">
    <location>
        <position position="307"/>
    </location>
    <ligand>
        <name>Mg(2+)</name>
        <dbReference type="ChEBI" id="CHEBI:18420"/>
        <label>2</label>
    </ligand>
</feature>
<feature type="binding site" evidence="1">
    <location>
        <position position="307"/>
    </location>
    <ligand>
        <name>Mn(2+)</name>
        <dbReference type="ChEBI" id="CHEBI:29035"/>
        <label>2</label>
    </ligand>
</feature>
<feature type="binding site" evidence="1">
    <location>
        <position position="718"/>
    </location>
    <ligand>
        <name>ATP</name>
        <dbReference type="ChEBI" id="CHEBI:30616"/>
        <label>2</label>
    </ligand>
</feature>
<feature type="binding site" evidence="1">
    <location>
        <position position="757"/>
    </location>
    <ligand>
        <name>ATP</name>
        <dbReference type="ChEBI" id="CHEBI:30616"/>
        <label>2</label>
    </ligand>
</feature>
<feature type="binding site" evidence="1">
    <location>
        <position position="759"/>
    </location>
    <ligand>
        <name>ATP</name>
        <dbReference type="ChEBI" id="CHEBI:30616"/>
        <label>2</label>
    </ligand>
</feature>
<feature type="binding site" evidence="1">
    <location>
        <position position="764"/>
    </location>
    <ligand>
        <name>ATP</name>
        <dbReference type="ChEBI" id="CHEBI:30616"/>
        <label>2</label>
    </ligand>
</feature>
<feature type="binding site" evidence="1">
    <location>
        <position position="789"/>
    </location>
    <ligand>
        <name>ATP</name>
        <dbReference type="ChEBI" id="CHEBI:30616"/>
        <label>2</label>
    </ligand>
</feature>
<feature type="binding site" evidence="1">
    <location>
        <position position="790"/>
    </location>
    <ligand>
        <name>ATP</name>
        <dbReference type="ChEBI" id="CHEBI:30616"/>
        <label>2</label>
    </ligand>
</feature>
<feature type="binding site" evidence="1">
    <location>
        <position position="791"/>
    </location>
    <ligand>
        <name>ATP</name>
        <dbReference type="ChEBI" id="CHEBI:30616"/>
        <label>2</label>
    </ligand>
</feature>
<feature type="binding site" evidence="1">
    <location>
        <position position="792"/>
    </location>
    <ligand>
        <name>ATP</name>
        <dbReference type="ChEBI" id="CHEBI:30616"/>
        <label>2</label>
    </ligand>
</feature>
<feature type="binding site" evidence="1">
    <location>
        <position position="832"/>
    </location>
    <ligand>
        <name>ATP</name>
        <dbReference type="ChEBI" id="CHEBI:30616"/>
        <label>2</label>
    </ligand>
</feature>
<feature type="binding site" evidence="1">
    <location>
        <position position="832"/>
    </location>
    <ligand>
        <name>Mg(2+)</name>
        <dbReference type="ChEBI" id="CHEBI:18420"/>
        <label>3</label>
    </ligand>
</feature>
<feature type="binding site" evidence="1">
    <location>
        <position position="832"/>
    </location>
    <ligand>
        <name>Mn(2+)</name>
        <dbReference type="ChEBI" id="CHEBI:29035"/>
        <label>3</label>
    </ligand>
</feature>
<feature type="binding site" evidence="1">
    <location>
        <position position="844"/>
    </location>
    <ligand>
        <name>ATP</name>
        <dbReference type="ChEBI" id="CHEBI:30616"/>
        <label>2</label>
    </ligand>
</feature>
<feature type="binding site" evidence="1">
    <location>
        <position position="844"/>
    </location>
    <ligand>
        <name>Mg(2+)</name>
        <dbReference type="ChEBI" id="CHEBI:18420"/>
        <label>3</label>
    </ligand>
</feature>
<feature type="binding site" evidence="1">
    <location>
        <position position="844"/>
    </location>
    <ligand>
        <name>Mg(2+)</name>
        <dbReference type="ChEBI" id="CHEBI:18420"/>
        <label>4</label>
    </ligand>
</feature>
<feature type="binding site" evidence="1">
    <location>
        <position position="844"/>
    </location>
    <ligand>
        <name>Mn(2+)</name>
        <dbReference type="ChEBI" id="CHEBI:29035"/>
        <label>3</label>
    </ligand>
</feature>
<feature type="binding site" evidence="1">
    <location>
        <position position="844"/>
    </location>
    <ligand>
        <name>Mn(2+)</name>
        <dbReference type="ChEBI" id="CHEBI:29035"/>
        <label>4</label>
    </ligand>
</feature>
<feature type="binding site" evidence="1">
    <location>
        <position position="846"/>
    </location>
    <ligand>
        <name>Mg(2+)</name>
        <dbReference type="ChEBI" id="CHEBI:18420"/>
        <label>4</label>
    </ligand>
</feature>
<feature type="binding site" evidence="1">
    <location>
        <position position="846"/>
    </location>
    <ligand>
        <name>Mn(2+)</name>
        <dbReference type="ChEBI" id="CHEBI:29035"/>
        <label>4</label>
    </ligand>
</feature>
<name>CARB_STRAW</name>
<sequence length="1102" mass="117894">MPKRTDIQSVLVIGSGPIVIGQAAEFDYSGTQACRILRAEGLRVILVNSNPATIMTDPEIADATYVEPITPEFVEKIIAKERPDALLPTLGGQTALNTAISMHEQGVLEKYGVELIGANVEAINKGEDRDLFKGVVEAVRAKIGHGESARSVICHSMDDVLEGVETLGGYPVVVRPSFTMGGAGSGFAHDEEELRRIAGQGLTLSPTTEVLLEESILGWKEYELELMRDKNDNVVVVCSIENFDPMGVHTGDSITVAPSMTLTDREYQRLRDIGIAIIREVGVDTGGCNIQFAVNPDDGRIIVIEMNPRVSRSSALASKATGFPIAKIAAKLAVGYTLDEIPNDITEKTPASFEPTLDYVVVKAPRFAFEKFPSADSTLTTTMKSVGEAMAIGRNFTEALQKALRSLEKKGSQFTFVGEPGDKALLLEEAVRPTDGRINSVMQAIRAGATPEEVFEATKIDPWFVDQLFLIKELADELAAADKLDPELLAEAKRHGFSDVQIAEIRGLREDVVREVRHALGVRPVYKTVDTCAAEFAAKTPYFYSSYDEESEVAPREKPAVIILGSGPNRIGQGIEFDYSCVHASFALSEAGYETVMVNCNPETVSTDYDTSDRLYFEPLTLEDVLEIVHAETLAGPVAGVIVQLGGQTPLGLSQALKDNGVPVVGTPPEAIHAAEDRGAFGQVLAEAGLPAPKHGTATTFAGAKAIADEIGYPVLVRPSYVLGGRGMEIVYDETRLESYIAESTEISPSRPVLVDRFLDDAIEIDVDALYDGEELYLGGVMEHIEEAGIHSGDSACALPPITLGGFDIKRLRASTEAIAKGVGVRGLINIQFAMAGDILYVLEANPRASRTVPFTSKATAVPLAKAAARISLGATIAELRAERLLPANGDGGTLPLDAPISVKEAVMPWSRFRDIHGRGVDTVLGPEMRSTGEVMGIDSVFGTAYAKSQAGAYGPLPTKGRAFISVANRDKRSMIFPARELVAHGFELLATSGTAEVLKRNGINATVVRKQSEGEGPGGEKTIVQLIHDGQVDLIVNTPYGTGGRLDGYEIRTAAVARSVPCLTTVQALAAAVQGIDALTHGDVGVRSLQEHAEHLTAARD</sequence>
<reference key="1">
    <citation type="journal article" date="2001" name="Proc. Natl. Acad. Sci. U.S.A.">
        <title>Genome sequence of an industrial microorganism Streptomyces avermitilis: deducing the ability of producing secondary metabolites.</title>
        <authorList>
            <person name="Omura S."/>
            <person name="Ikeda H."/>
            <person name="Ishikawa J."/>
            <person name="Hanamoto A."/>
            <person name="Takahashi C."/>
            <person name="Shinose M."/>
            <person name="Takahashi Y."/>
            <person name="Horikawa H."/>
            <person name="Nakazawa H."/>
            <person name="Osonoe T."/>
            <person name="Kikuchi H."/>
            <person name="Shiba T."/>
            <person name="Sakaki Y."/>
            <person name="Hattori M."/>
        </authorList>
    </citation>
    <scope>NUCLEOTIDE SEQUENCE [LARGE SCALE GENOMIC DNA]</scope>
    <source>
        <strain>ATCC 31267 / DSM 46492 / JCM 5070 / NBRC 14893 / NCIMB 12804 / NRRL 8165 / MA-4680</strain>
    </source>
</reference>
<reference key="2">
    <citation type="journal article" date="2003" name="Nat. Biotechnol.">
        <title>Complete genome sequence and comparative analysis of the industrial microorganism Streptomyces avermitilis.</title>
        <authorList>
            <person name="Ikeda H."/>
            <person name="Ishikawa J."/>
            <person name="Hanamoto A."/>
            <person name="Shinose M."/>
            <person name="Kikuchi H."/>
            <person name="Shiba T."/>
            <person name="Sakaki Y."/>
            <person name="Hattori M."/>
            <person name="Omura S."/>
        </authorList>
    </citation>
    <scope>NUCLEOTIDE SEQUENCE [LARGE SCALE GENOMIC DNA]</scope>
    <source>
        <strain>ATCC 31267 / DSM 46492 / JCM 5070 / NBRC 14893 / NCIMB 12804 / NRRL 8165 / MA-4680</strain>
    </source>
</reference>
<protein>
    <recommendedName>
        <fullName evidence="1">Carbamoyl phosphate synthase large chain</fullName>
        <ecNumber evidence="1">6.3.4.16</ecNumber>
        <ecNumber evidence="1">6.3.5.5</ecNumber>
    </recommendedName>
    <alternativeName>
        <fullName evidence="1">Carbamoyl phosphate synthetase ammonia chain</fullName>
    </alternativeName>
</protein>
<proteinExistence type="inferred from homology"/>
<comment type="function">
    <text evidence="1">Large subunit of the glutamine-dependent carbamoyl phosphate synthetase (CPSase). CPSase catalyzes the formation of carbamoyl phosphate from the ammonia moiety of glutamine, carbonate, and phosphate donated by ATP, constituting the first step of 2 biosynthetic pathways, one leading to arginine and/or urea and the other to pyrimidine nucleotides. The large subunit (synthetase) binds the substrates ammonia (free or transferred from glutamine from the small subunit), hydrogencarbonate and ATP and carries out an ATP-coupled ligase reaction, activating hydrogencarbonate by forming carboxy phosphate which reacts with ammonia to form carbamoyl phosphate.</text>
</comment>
<comment type="catalytic activity">
    <reaction evidence="1">
        <text>hydrogencarbonate + L-glutamine + 2 ATP + H2O = carbamoyl phosphate + L-glutamate + 2 ADP + phosphate + 2 H(+)</text>
        <dbReference type="Rhea" id="RHEA:18633"/>
        <dbReference type="ChEBI" id="CHEBI:15377"/>
        <dbReference type="ChEBI" id="CHEBI:15378"/>
        <dbReference type="ChEBI" id="CHEBI:17544"/>
        <dbReference type="ChEBI" id="CHEBI:29985"/>
        <dbReference type="ChEBI" id="CHEBI:30616"/>
        <dbReference type="ChEBI" id="CHEBI:43474"/>
        <dbReference type="ChEBI" id="CHEBI:58228"/>
        <dbReference type="ChEBI" id="CHEBI:58359"/>
        <dbReference type="ChEBI" id="CHEBI:456216"/>
        <dbReference type="EC" id="6.3.5.5"/>
    </reaction>
</comment>
<comment type="catalytic activity">
    <molecule>Carbamoyl phosphate synthase large chain</molecule>
    <reaction evidence="1">
        <text>hydrogencarbonate + NH4(+) + 2 ATP = carbamoyl phosphate + 2 ADP + phosphate + 2 H(+)</text>
        <dbReference type="Rhea" id="RHEA:18029"/>
        <dbReference type="ChEBI" id="CHEBI:15378"/>
        <dbReference type="ChEBI" id="CHEBI:17544"/>
        <dbReference type="ChEBI" id="CHEBI:28938"/>
        <dbReference type="ChEBI" id="CHEBI:30616"/>
        <dbReference type="ChEBI" id="CHEBI:43474"/>
        <dbReference type="ChEBI" id="CHEBI:58228"/>
        <dbReference type="ChEBI" id="CHEBI:456216"/>
        <dbReference type="EC" id="6.3.4.16"/>
    </reaction>
</comment>
<comment type="cofactor">
    <cofactor evidence="1">
        <name>Mg(2+)</name>
        <dbReference type="ChEBI" id="CHEBI:18420"/>
    </cofactor>
    <cofactor evidence="1">
        <name>Mn(2+)</name>
        <dbReference type="ChEBI" id="CHEBI:29035"/>
    </cofactor>
    <text evidence="1">Binds 4 Mg(2+) or Mn(2+) ions per subunit.</text>
</comment>
<comment type="pathway">
    <text evidence="1">Amino-acid biosynthesis; L-arginine biosynthesis; carbamoyl phosphate from bicarbonate: step 1/1.</text>
</comment>
<comment type="pathway">
    <text evidence="1">Pyrimidine metabolism; UMP biosynthesis via de novo pathway; (S)-dihydroorotate from bicarbonate: step 1/3.</text>
</comment>
<comment type="subunit">
    <text evidence="1">Composed of two chains; the small (or glutamine) chain promotes the hydrolysis of glutamine to ammonia, which is used by the large (or ammonia) chain to synthesize carbamoyl phosphate. Tetramer of heterodimers (alpha,beta)4.</text>
</comment>
<comment type="domain">
    <text evidence="1">The large subunit is composed of 2 ATP-grasp domains that are involved in binding the 2 ATP molecules needed for carbamoyl phosphate synthesis. The N-terminal ATP-grasp domain (referred to as the carboxyphosphate synthetic component) catalyzes the ATP-dependent phosphorylation of hydrogencarbonate to carboxyphosphate and the subsequent nucleophilic attack by ammonia to form a carbamate intermediate. The C-terminal ATP-grasp domain (referred to as the carbamoyl phosphate synthetic component) then catalyzes the phosphorylation of carbamate with the second ATP to form the end product carbamoyl phosphate. The reactive and unstable enzyme intermediates are sequentially channeled from one active site to the next through the interior of the protein over a distance of at least 96 A.</text>
</comment>
<comment type="similarity">
    <text evidence="1">Belongs to the CarB family.</text>
</comment>
<organism>
    <name type="scientific">Streptomyces avermitilis (strain ATCC 31267 / DSM 46492 / JCM 5070 / NBRC 14893 / NCIMB 12804 / NRRL 8165 / MA-4680)</name>
    <dbReference type="NCBI Taxonomy" id="227882"/>
    <lineage>
        <taxon>Bacteria</taxon>
        <taxon>Bacillati</taxon>
        <taxon>Actinomycetota</taxon>
        <taxon>Actinomycetes</taxon>
        <taxon>Kitasatosporales</taxon>
        <taxon>Streptomycetaceae</taxon>
        <taxon>Streptomyces</taxon>
    </lineage>
</organism>
<accession>Q827Q7</accession>
<evidence type="ECO:0000255" key="1">
    <source>
        <dbReference type="HAMAP-Rule" id="MF_01210"/>
    </source>
</evidence>